<keyword id="KW-0012">Acyltransferase</keyword>
<keyword id="KW-0021">Allosteric enzyme</keyword>
<keyword id="KW-0175">Coiled coil</keyword>
<keyword id="KW-0210">Decarboxylase</keyword>
<keyword id="KW-0456">Lyase</keyword>
<keyword id="KW-0460">Magnesium</keyword>
<keyword id="KW-0479">Metal-binding</keyword>
<keyword id="KW-0511">Multifunctional enzyme</keyword>
<keyword id="KW-0560">Oxidoreductase</keyword>
<keyword id="KW-0786">Thiamine pyrophosphate</keyword>
<keyword id="KW-0808">Transferase</keyword>
<keyword id="KW-0816">Tricarboxylic acid cycle</keyword>
<comment type="function">
    <text evidence="1">Shows three enzymatic activities that share a first common step, the attack of thiamine-PP on 2-oxoglutarate (alpha-ketoglutarate, KG), leading to the formation of an enamine-thiamine-PP intermediate upon decarboxylation. Thus, displays KGD activity, catalyzing the decarboxylation from five-carbon 2-oxoglutarate to four-carbon succinate semialdehyde (SSA). Also catalyzes C-C bond formation between the activated aldehyde formed after decarboxylation of alpha-ketoglutarate and the carbonyl of glyoxylate (GLX), to yield 2-hydroxy-3-oxoadipate (HOA), which spontaneously decarboxylates to form 5-hydroxylevulinate (HLA). And is also a component of the 2-oxoglutarate dehydrogenase (ODH) complex, that catalyzes the overall conversion of 2-oxoglutarate to succinyl-CoA and CO(2). The KG decarboxylase and KG dehydrogenase reactions provide two alternative, tightly regulated, pathways connecting the oxidative and reductive branches of the TCA cycle (By similarity).</text>
</comment>
<comment type="catalytic activity">
    <reaction>
        <text>glyoxylate + 2-oxoglutarate + H(+) = 2-hydroxy-3-oxoadipate + CO2</text>
        <dbReference type="Rhea" id="RHEA:14341"/>
        <dbReference type="ChEBI" id="CHEBI:15378"/>
        <dbReference type="ChEBI" id="CHEBI:16526"/>
        <dbReference type="ChEBI" id="CHEBI:16810"/>
        <dbReference type="ChEBI" id="CHEBI:36655"/>
        <dbReference type="ChEBI" id="CHEBI:57712"/>
        <dbReference type="EC" id="2.2.1.5"/>
    </reaction>
</comment>
<comment type="catalytic activity">
    <reaction>
        <text>2-oxoglutarate + H(+) = succinate semialdehyde + CO2</text>
        <dbReference type="Rhea" id="RHEA:10524"/>
        <dbReference type="ChEBI" id="CHEBI:15378"/>
        <dbReference type="ChEBI" id="CHEBI:16526"/>
        <dbReference type="ChEBI" id="CHEBI:16810"/>
        <dbReference type="ChEBI" id="CHEBI:57706"/>
        <dbReference type="EC" id="4.1.1.71"/>
    </reaction>
</comment>
<comment type="catalytic activity">
    <reaction>
        <text>N(6)-[(R)-lipoyl]-L-lysyl-[protein] + 2-oxoglutarate + H(+) = N(6)-[(R)-S(8)-succinyldihydrolipoyl]-L-lysyl-[protein] + CO2</text>
        <dbReference type="Rhea" id="RHEA:12188"/>
        <dbReference type="Rhea" id="RHEA-COMP:10474"/>
        <dbReference type="Rhea" id="RHEA-COMP:20092"/>
        <dbReference type="ChEBI" id="CHEBI:15378"/>
        <dbReference type="ChEBI" id="CHEBI:16526"/>
        <dbReference type="ChEBI" id="CHEBI:16810"/>
        <dbReference type="ChEBI" id="CHEBI:83099"/>
        <dbReference type="ChEBI" id="CHEBI:83120"/>
        <dbReference type="EC" id="1.2.4.2"/>
    </reaction>
</comment>
<comment type="catalytic activity">
    <reaction>
        <text>N(6)-[(R)-dihydrolipoyl]-L-lysyl-[protein] + succinyl-CoA = N(6)-[(R)-S(8)-succinyldihydrolipoyl]-L-lysyl-[protein] + CoA</text>
        <dbReference type="Rhea" id="RHEA:15213"/>
        <dbReference type="Rhea" id="RHEA-COMP:10475"/>
        <dbReference type="Rhea" id="RHEA-COMP:20092"/>
        <dbReference type="ChEBI" id="CHEBI:57287"/>
        <dbReference type="ChEBI" id="CHEBI:57292"/>
        <dbReference type="ChEBI" id="CHEBI:83100"/>
        <dbReference type="ChEBI" id="CHEBI:83120"/>
        <dbReference type="EC" id="2.3.1.61"/>
    </reaction>
</comment>
<comment type="cofactor">
    <cofactor evidence="1">
        <name>Mg(2+)</name>
        <dbReference type="ChEBI" id="CHEBI:18420"/>
    </cofactor>
</comment>
<comment type="cofactor">
    <cofactor evidence="1">
        <name>thiamine diphosphate</name>
        <dbReference type="ChEBI" id="CHEBI:58937"/>
    </cofactor>
</comment>
<comment type="activity regulation">
    <text evidence="1">Alpha-ketoglutarate dehydrogenase and decarboxylase activities are inhibited by unphosphorylated GarA, and allosterically activated by acetyl-CoA, the main substrate of the TCA cycle.</text>
</comment>
<comment type="pathway">
    <text>Carbohydrate metabolism; tricarboxylic acid cycle; succinate from 2-oxoglutarate (transferase route): step 1/2.</text>
</comment>
<comment type="pathway">
    <text>Carbohydrate metabolism; tricarboxylic acid cycle; succinyl-CoA from 2-oxoglutarate (dehydrogenase route): step 1/1.</text>
</comment>
<comment type="subunit">
    <text evidence="1">Homodimer. The 2-oxoglutarate dehydrogenase (ODH) complex contains multiple copies of three enzymatic components: 2-oxoglutarate dehydrogenase (E1), dihydrolipoamide succinyltransferase (E2) and lipoamide dehydrogenase (E3) (By similarity).</text>
</comment>
<comment type="domain">
    <text evidence="1">Is a fusion protein with two major domains exhibiting structural features of an E1 and E2 protein, and a short sequence stretch of E1 localized at the N-terminus, which is connected by a linker region to the rest of the protein.</text>
</comment>
<comment type="similarity">
    <text evidence="5">Belongs to the 2-oxoacid dehydrogenase family. Kgd subfamily.</text>
</comment>
<comment type="sequence caution" evidence="5">
    <conflict type="erroneous initiation">
        <sequence resource="EMBL-CDS" id="ABM15252"/>
    </conflict>
</comment>
<evidence type="ECO:0000250" key="1"/>
<evidence type="ECO:0000250" key="2">
    <source>
        <dbReference type="UniProtKB" id="A0R2B1"/>
    </source>
</evidence>
<evidence type="ECO:0000255" key="3"/>
<evidence type="ECO:0000256" key="4">
    <source>
        <dbReference type="SAM" id="MobiDB-lite"/>
    </source>
</evidence>
<evidence type="ECO:0000305" key="5"/>
<name>KGD_MYCVP</name>
<gene>
    <name type="primary">kgd</name>
    <name type="ordered locus">Mvan_4477</name>
</gene>
<accession>A1TDK2</accession>
<dbReference type="EC" id="2.2.1.5"/>
<dbReference type="EC" id="4.1.1.71"/>
<dbReference type="EC" id="1.2.4.2"/>
<dbReference type="EC" id="2.3.1.61"/>
<dbReference type="EMBL" id="CP000511">
    <property type="protein sequence ID" value="ABM15252.1"/>
    <property type="status" value="ALT_INIT"/>
    <property type="molecule type" value="Genomic_DNA"/>
</dbReference>
<dbReference type="SMR" id="A1TDK2"/>
<dbReference type="STRING" id="350058.Mvan_4477"/>
<dbReference type="KEGG" id="mva:Mvan_4477"/>
<dbReference type="eggNOG" id="COG0508">
    <property type="taxonomic scope" value="Bacteria"/>
</dbReference>
<dbReference type="eggNOG" id="COG0567">
    <property type="taxonomic scope" value="Bacteria"/>
</dbReference>
<dbReference type="HOGENOM" id="CLU_004709_1_0_11"/>
<dbReference type="UniPathway" id="UPA00223">
    <property type="reaction ID" value="UER00997"/>
</dbReference>
<dbReference type="UniPathway" id="UPA00223">
    <property type="reaction ID" value="UER01001"/>
</dbReference>
<dbReference type="Proteomes" id="UP000009159">
    <property type="component" value="Chromosome"/>
</dbReference>
<dbReference type="GO" id="GO:0005829">
    <property type="term" value="C:cytosol"/>
    <property type="evidence" value="ECO:0007669"/>
    <property type="project" value="TreeGrafter"/>
</dbReference>
<dbReference type="GO" id="GO:0045252">
    <property type="term" value="C:oxoglutarate dehydrogenase complex"/>
    <property type="evidence" value="ECO:0007669"/>
    <property type="project" value="TreeGrafter"/>
</dbReference>
<dbReference type="GO" id="GO:0050439">
    <property type="term" value="F:2-hydroxy-3-oxoadipate synthase activity"/>
    <property type="evidence" value="ECO:0007669"/>
    <property type="project" value="UniProtKB-EC"/>
</dbReference>
<dbReference type="GO" id="GO:0008683">
    <property type="term" value="F:2-oxoglutarate decarboxylase activity"/>
    <property type="evidence" value="ECO:0007669"/>
    <property type="project" value="UniProtKB-EC"/>
</dbReference>
<dbReference type="GO" id="GO:0004149">
    <property type="term" value="F:dihydrolipoyllysine-residue succinyltransferase activity"/>
    <property type="evidence" value="ECO:0007669"/>
    <property type="project" value="UniProtKB-EC"/>
</dbReference>
<dbReference type="GO" id="GO:0000287">
    <property type="term" value="F:magnesium ion binding"/>
    <property type="evidence" value="ECO:0007669"/>
    <property type="project" value="UniProtKB-ARBA"/>
</dbReference>
<dbReference type="GO" id="GO:0004591">
    <property type="term" value="F:oxoglutarate dehydrogenase (succinyl-transferring) activity"/>
    <property type="evidence" value="ECO:0007669"/>
    <property type="project" value="UniProtKB-EC"/>
</dbReference>
<dbReference type="GO" id="GO:0030976">
    <property type="term" value="F:thiamine pyrophosphate binding"/>
    <property type="evidence" value="ECO:0007669"/>
    <property type="project" value="InterPro"/>
</dbReference>
<dbReference type="GO" id="GO:0006099">
    <property type="term" value="P:tricarboxylic acid cycle"/>
    <property type="evidence" value="ECO:0007669"/>
    <property type="project" value="UniProtKB-UniPathway"/>
</dbReference>
<dbReference type="CDD" id="cd02016">
    <property type="entry name" value="TPP_E1_OGDC_like"/>
    <property type="match status" value="1"/>
</dbReference>
<dbReference type="FunFam" id="3.40.50.11610:FF:000002">
    <property type="entry name" value="2-oxoglutarate dehydrogenase E1 component"/>
    <property type="match status" value="1"/>
</dbReference>
<dbReference type="FunFam" id="3.40.50.970:FF:000018">
    <property type="entry name" value="2-oxoglutarate dehydrogenase E1 component"/>
    <property type="match status" value="1"/>
</dbReference>
<dbReference type="Gene3D" id="3.40.50.12470">
    <property type="match status" value="1"/>
</dbReference>
<dbReference type="Gene3D" id="3.40.50.970">
    <property type="match status" value="1"/>
</dbReference>
<dbReference type="Gene3D" id="3.30.559.10">
    <property type="entry name" value="Chloramphenicol acetyltransferase-like domain"/>
    <property type="match status" value="1"/>
</dbReference>
<dbReference type="Gene3D" id="3.40.50.11610">
    <property type="entry name" value="Multifunctional 2-oxoglutarate metabolism enzyme, C-terminal domain"/>
    <property type="match status" value="1"/>
</dbReference>
<dbReference type="Gene3D" id="1.10.287.1150">
    <property type="entry name" value="TPP helical domain"/>
    <property type="match status" value="1"/>
</dbReference>
<dbReference type="InterPro" id="IPR001078">
    <property type="entry name" value="2-oxoacid_DH_actylTfrase"/>
</dbReference>
<dbReference type="InterPro" id="IPR032106">
    <property type="entry name" value="2-oxogl_dehyd_N"/>
</dbReference>
<dbReference type="InterPro" id="IPR011603">
    <property type="entry name" value="2oxoglutarate_DH_E1"/>
</dbReference>
<dbReference type="InterPro" id="IPR023213">
    <property type="entry name" value="CAT-like_dom_sf"/>
</dbReference>
<dbReference type="InterPro" id="IPR001017">
    <property type="entry name" value="DH_E1"/>
</dbReference>
<dbReference type="InterPro" id="IPR042179">
    <property type="entry name" value="KGD_C_sf"/>
</dbReference>
<dbReference type="InterPro" id="IPR031717">
    <property type="entry name" value="ODO-1/KGD_C"/>
</dbReference>
<dbReference type="InterPro" id="IPR029061">
    <property type="entry name" value="THDP-binding"/>
</dbReference>
<dbReference type="InterPro" id="IPR005475">
    <property type="entry name" value="Transketolase-like_Pyr-bd"/>
</dbReference>
<dbReference type="NCBIfam" id="TIGR00239">
    <property type="entry name" value="2oxo_dh_E1"/>
    <property type="match status" value="1"/>
</dbReference>
<dbReference type="NCBIfam" id="NF006914">
    <property type="entry name" value="PRK09404.1"/>
    <property type="match status" value="1"/>
</dbReference>
<dbReference type="NCBIfam" id="NF008907">
    <property type="entry name" value="PRK12270.1"/>
    <property type="match status" value="1"/>
</dbReference>
<dbReference type="PANTHER" id="PTHR23152:SF4">
    <property type="entry name" value="2-OXOADIPATE DEHYDROGENASE COMPLEX COMPONENT E1"/>
    <property type="match status" value="1"/>
</dbReference>
<dbReference type="PANTHER" id="PTHR23152">
    <property type="entry name" value="2-OXOGLUTARATE DEHYDROGENASE"/>
    <property type="match status" value="1"/>
</dbReference>
<dbReference type="Pfam" id="PF00198">
    <property type="entry name" value="2-oxoacid_dh"/>
    <property type="match status" value="1"/>
</dbReference>
<dbReference type="Pfam" id="PF16078">
    <property type="entry name" value="2-oxogl_dehyd_N"/>
    <property type="match status" value="1"/>
</dbReference>
<dbReference type="Pfam" id="PF00676">
    <property type="entry name" value="E1_dh"/>
    <property type="match status" value="1"/>
</dbReference>
<dbReference type="Pfam" id="PF16870">
    <property type="entry name" value="OxoGdeHyase_C"/>
    <property type="match status" value="1"/>
</dbReference>
<dbReference type="Pfam" id="PF02779">
    <property type="entry name" value="Transket_pyr"/>
    <property type="match status" value="1"/>
</dbReference>
<dbReference type="PIRSF" id="PIRSF000157">
    <property type="entry name" value="Oxoglu_dh_E1"/>
    <property type="match status" value="1"/>
</dbReference>
<dbReference type="SMART" id="SM00861">
    <property type="entry name" value="Transket_pyr"/>
    <property type="match status" value="1"/>
</dbReference>
<dbReference type="SUPFAM" id="SSF52777">
    <property type="entry name" value="CoA-dependent acyltransferases"/>
    <property type="match status" value="1"/>
</dbReference>
<dbReference type="SUPFAM" id="SSF52518">
    <property type="entry name" value="Thiamin diphosphate-binding fold (THDP-binding)"/>
    <property type="match status" value="2"/>
</dbReference>
<protein>
    <recommendedName>
        <fullName>Multifunctional 2-oxoglutarate metabolism enzyme</fullName>
    </recommendedName>
    <alternativeName>
        <fullName>2-hydroxy-3-oxoadipate synthase</fullName>
        <shortName>HOA synthase</shortName>
        <shortName>HOAS</shortName>
        <ecNumber>2.2.1.5</ecNumber>
    </alternativeName>
    <alternativeName>
        <fullName>2-oxoglutarate carboxy-lyase</fullName>
    </alternativeName>
    <alternativeName>
        <fullName>2-oxoglutarate decarboxylase</fullName>
    </alternativeName>
    <alternativeName>
        <fullName>Alpha-ketoglutarate decarboxylase</fullName>
        <shortName>KG decarboxylase</shortName>
        <shortName>KGD</shortName>
        <ecNumber>4.1.1.71</ecNumber>
    </alternativeName>
    <alternativeName>
        <fullName>Alpha-ketoglutarate-glyoxylate carboligase</fullName>
    </alternativeName>
    <domain>
        <recommendedName>
            <fullName>2-oxoglutarate dehydrogenase E1 component</fullName>
            <shortName>ODH E1 component</shortName>
            <ecNumber>1.2.4.2</ecNumber>
        </recommendedName>
        <alternativeName>
            <fullName>Alpha-ketoglutarate dehydrogenase E1 component</fullName>
            <shortName>KDH E1 component</shortName>
        </alternativeName>
    </domain>
    <domain>
        <recommendedName>
            <fullName>Dihydrolipoyllysine-residue succinyltransferase component of 2-oxoglutarate dehydrogenase complex</fullName>
            <ecNumber>2.3.1.61</ecNumber>
        </recommendedName>
        <alternativeName>
            <fullName>2-oxoglutarate dehydrogenase complex E2 component</fullName>
            <shortName>ODH E2 component</shortName>
            <shortName>OGDC-E2</shortName>
        </alternativeName>
        <alternativeName>
            <fullName>Dihydrolipoamide succinyltransferase</fullName>
        </alternativeName>
    </domain>
</protein>
<sequence>MNSPSPFGQNEWLVEEMYRKFREDPSSVDPSWHEFLVDYSPEPTNDAPAGNGKPAAAPTAPPEPASAPAPKPASTNGGAPPAKADTSTTRAPEKKPEEKTSPAPKAKTAAPAGVSDDDETQVLRGAAAAVVKNMSASLDVPTATSVRAIPAKAMIDNRIVINNHLKRTRGGKISFTHLLGYAIVQAVKKFPNMNRHFAEIDGKPVAVTPAHTNLGLAIDLPGKDGKRSLVVAAIKNCETMHFGQFIAAYEDIVRRARDGKLTAEDFAGVTISLTNPGTIGTVHSVPRLMKGQGAIVGAGAMEYPAEFQGASEERIAELGVGKLMTLTSTYDHRIIQGAESGDFLRTIHTLLLDDEFYDEIFRELGIPHEPVRWRIDNPDSIEDKNARVIELIAAYRNRGHLMADIDPLRLDKTRFRSHPDLDVNTHGLTLWDLDREFKVNGFAGKTHKKLRDILGLLRDAYCRHIGVEYTHILEPEQQQWLQERIEVKHEKPTVAEQKYILSKLNAAEAFETFLQTKYVGQKRFSLEGAETVIPMMDAAIDQCAEHGLDEVVIGMPHRGRLNVLANIVGKPYSQIFTEFEGNLNPSQAHGSGDVKYHLGANGTYIQMFGDNDIDVSLVANPSHLEAVDPVLEGLVRAKQDILDKGNGPDGFTVVPMMLHGDAAFAGQGVVAETLNLALLRGYRTGGTIHIIVNNQIGFTTSPYDSRSSEYCTDVAKMIGAPIFHVNGDDPEACVWVAKLAVDFRQKFKKDVVIDMLCYRRRGHNEGDDPSMTQPTMYDVIDTKRGVRKSYTEALIGRGDISMKEAEDALRDYQGQLERVFNEVRELEKHAIAPSSSVESDQMVPAGMSTAVDKSLLARIGDAHLGYPDDFNVHPRVKPVLEKRREMAYEGKVDWAFAELLALGTFLAEGKTIRFTGQDTRRGTFTQRHSVIIDRQTGREFTPLDLLTVDSDGNPTGGKFMAYDSALSEFAAVGFEYGYSVGNPNALVLWEAQFGDFVNGAQSIIDEFISSGEAKWGQLSDVVLLLPHGHEGQGPDHTSGRIERFLLLWAEGSMTIAMPSTPANYFHLLRRHGLDGIHRPLIVFTPKSMLRNKAAVSDLKDFTEMKFRSVLEEPTYTEGTGDRSKAKRILLTSGKLYYELAARKSKEGRDDVAILRLEQLAPLPKRRLAATLDEYPNAEQYFWVQEEPANQGAWPTLGLTLPEVLPEKLAGIKRISRRAMSAPSSGSSKVHAVEQQEIIDEAFG</sequence>
<feature type="chain" id="PRO_0000310725" description="Multifunctional 2-oxoglutarate metabolism enzyme">
    <location>
        <begin position="1"/>
        <end position="1243"/>
    </location>
</feature>
<feature type="region of interest" description="2-oxoglutarate dehydrogenase E1, N-terminal part">
    <location>
        <begin position="1"/>
        <end position="40"/>
    </location>
</feature>
<feature type="region of interest" description="Disordered" evidence="4">
    <location>
        <begin position="22"/>
        <end position="118"/>
    </location>
</feature>
<feature type="region of interest" description="Linker">
    <location>
        <begin position="41"/>
        <end position="103"/>
    </location>
</feature>
<feature type="region of interest" description="Succinyltransferase E2">
    <location>
        <begin position="104"/>
        <end position="353"/>
    </location>
</feature>
<feature type="region of interest" description="2-oxoglutarate dehydrogenase E1, C-terminal part">
    <location>
        <begin position="354"/>
        <end position="1243"/>
    </location>
</feature>
<feature type="coiled-coil region" evidence="3">
    <location>
        <begin position="799"/>
        <end position="831"/>
    </location>
</feature>
<feature type="compositionally biased region" description="Basic and acidic residues" evidence="4">
    <location>
        <begin position="22"/>
        <end position="36"/>
    </location>
</feature>
<feature type="compositionally biased region" description="Low complexity" evidence="4">
    <location>
        <begin position="47"/>
        <end position="58"/>
    </location>
</feature>
<feature type="compositionally biased region" description="Pro residues" evidence="4">
    <location>
        <begin position="59"/>
        <end position="71"/>
    </location>
</feature>
<feature type="compositionally biased region" description="Basic and acidic residues" evidence="4">
    <location>
        <begin position="91"/>
        <end position="100"/>
    </location>
</feature>
<feature type="compositionally biased region" description="Low complexity" evidence="4">
    <location>
        <begin position="101"/>
        <end position="112"/>
    </location>
</feature>
<feature type="active site" description="Proton acceptor; for succinyltransferase activity" evidence="1">
    <location>
        <position position="332"/>
    </location>
</feature>
<feature type="binding site" evidence="2">
    <location>
        <position position="558"/>
    </location>
    <ligand>
        <name>thiamine diphosphate</name>
        <dbReference type="ChEBI" id="CHEBI:58937"/>
    </ligand>
</feature>
<feature type="binding site" evidence="2">
    <location>
        <position position="597"/>
    </location>
    <ligand>
        <name>2-oxoglutarate</name>
        <dbReference type="ChEBI" id="CHEBI:16810"/>
    </ligand>
</feature>
<feature type="binding site" evidence="2">
    <location>
        <position position="622"/>
    </location>
    <ligand>
        <name>2-oxoglutarate</name>
        <dbReference type="ChEBI" id="CHEBI:16810"/>
    </ligand>
</feature>
<feature type="binding site" evidence="2">
    <location>
        <position position="622"/>
    </location>
    <ligand>
        <name>thiamine diphosphate</name>
        <dbReference type="ChEBI" id="CHEBI:58937"/>
    </ligand>
</feature>
<feature type="binding site" evidence="2">
    <location>
        <position position="624"/>
    </location>
    <ligand>
        <name>thiamine diphosphate</name>
        <dbReference type="ChEBI" id="CHEBI:58937"/>
    </ligand>
</feature>
<feature type="binding site" evidence="2">
    <location>
        <position position="661"/>
    </location>
    <ligand>
        <name>Mg(2+)</name>
        <dbReference type="ChEBI" id="CHEBI:18420"/>
    </ligand>
</feature>
<feature type="binding site" evidence="2">
    <location>
        <position position="661"/>
    </location>
    <ligand>
        <name>thiamine diphosphate</name>
        <dbReference type="ChEBI" id="CHEBI:58937"/>
    </ligand>
</feature>
<feature type="binding site" evidence="2">
    <location>
        <position position="662"/>
    </location>
    <ligand>
        <name>thiamine diphosphate</name>
        <dbReference type="ChEBI" id="CHEBI:58937"/>
    </ligand>
</feature>
<feature type="binding site" evidence="2">
    <location>
        <position position="663"/>
    </location>
    <ligand>
        <name>thiamine diphosphate</name>
        <dbReference type="ChEBI" id="CHEBI:58937"/>
    </ligand>
</feature>
<feature type="binding site" evidence="2">
    <location>
        <position position="694"/>
    </location>
    <ligand>
        <name>Mg(2+)</name>
        <dbReference type="ChEBI" id="CHEBI:18420"/>
    </ligand>
</feature>
<feature type="binding site" evidence="2">
    <location>
        <position position="694"/>
    </location>
    <ligand>
        <name>thiamine diphosphate</name>
        <dbReference type="ChEBI" id="CHEBI:58937"/>
    </ligand>
</feature>
<feature type="binding site" evidence="2">
    <location>
        <position position="696"/>
    </location>
    <ligand>
        <name>Mg(2+)</name>
        <dbReference type="ChEBI" id="CHEBI:18420"/>
    </ligand>
</feature>
<feature type="binding site" evidence="2">
    <location>
        <position position="1036"/>
    </location>
    <ligand>
        <name>2-oxoglutarate</name>
        <dbReference type="ChEBI" id="CHEBI:16810"/>
    </ligand>
</feature>
<feature type="binding site" evidence="2">
    <location>
        <position position="1054"/>
    </location>
    <ligand>
        <name>acetyl-CoA</name>
        <dbReference type="ChEBI" id="CHEBI:57288"/>
        <note>allosteric activator</note>
    </ligand>
</feature>
<feature type="binding site" evidence="2">
    <location>
        <position position="1070"/>
    </location>
    <ligand>
        <name>acetyl-CoA</name>
        <dbReference type="ChEBI" id="CHEBI:57288"/>
        <note>allosteric activator</note>
    </ligand>
</feature>
<feature type="binding site" evidence="2">
    <location>
        <position position="1105"/>
    </location>
    <ligand>
        <name>acetyl-CoA</name>
        <dbReference type="ChEBI" id="CHEBI:57288"/>
        <note>allosteric activator</note>
    </ligand>
</feature>
<feature type="binding site" evidence="2">
    <location>
        <position position="1108"/>
    </location>
    <ligand>
        <name>acetyl-CoA</name>
        <dbReference type="ChEBI" id="CHEBI:57288"/>
        <note>allosteric activator</note>
    </ligand>
</feature>
<feature type="binding site" evidence="2">
    <location>
        <position position="1158"/>
    </location>
    <ligand>
        <name>acetyl-CoA</name>
        <dbReference type="ChEBI" id="CHEBI:57288"/>
        <note>allosteric activator</note>
    </ligand>
</feature>
<feature type="binding site" evidence="2">
    <location>
        <position position="1165"/>
    </location>
    <ligand>
        <name>acetyl-CoA</name>
        <dbReference type="ChEBI" id="CHEBI:57288"/>
        <note>allosteric activator</note>
    </ligand>
</feature>
<feature type="binding site" evidence="2">
    <location>
        <position position="1166"/>
    </location>
    <ligand>
        <name>acetyl-CoA</name>
        <dbReference type="ChEBI" id="CHEBI:57288"/>
        <note>allosteric activator</note>
    </ligand>
</feature>
<proteinExistence type="inferred from homology"/>
<reference key="1">
    <citation type="submission" date="2006-12" db="EMBL/GenBank/DDBJ databases">
        <title>Complete sequence of Mycobacterium vanbaalenii PYR-1.</title>
        <authorList>
            <consortium name="US DOE Joint Genome Institute"/>
            <person name="Copeland A."/>
            <person name="Lucas S."/>
            <person name="Lapidus A."/>
            <person name="Barry K."/>
            <person name="Detter J.C."/>
            <person name="Glavina del Rio T."/>
            <person name="Hammon N."/>
            <person name="Israni S."/>
            <person name="Dalin E."/>
            <person name="Tice H."/>
            <person name="Pitluck S."/>
            <person name="Singan V."/>
            <person name="Schmutz J."/>
            <person name="Larimer F."/>
            <person name="Land M."/>
            <person name="Hauser L."/>
            <person name="Kyrpides N."/>
            <person name="Anderson I.J."/>
            <person name="Miller C."/>
            <person name="Richardson P."/>
        </authorList>
    </citation>
    <scope>NUCLEOTIDE SEQUENCE [LARGE SCALE GENOMIC DNA]</scope>
    <source>
        <strain>DSM 7251 / JCM 13017 / BCRC 16820 / KCTC 9966 / NRRL B-24157 / PYR-1</strain>
    </source>
</reference>
<organism>
    <name type="scientific">Mycolicibacterium vanbaalenii (strain DSM 7251 / JCM 13017 / BCRC 16820 / KCTC 9966 / NRRL B-24157 / PYR-1)</name>
    <name type="common">Mycobacterium vanbaalenii</name>
    <dbReference type="NCBI Taxonomy" id="350058"/>
    <lineage>
        <taxon>Bacteria</taxon>
        <taxon>Bacillati</taxon>
        <taxon>Actinomycetota</taxon>
        <taxon>Actinomycetes</taxon>
        <taxon>Mycobacteriales</taxon>
        <taxon>Mycobacteriaceae</taxon>
        <taxon>Mycolicibacterium</taxon>
    </lineage>
</organism>